<comment type="function">
    <text evidence="1 2 3">Outer mitochondrial translocase required to remove mislocalized tail-anchored transmembrane proteins on mitochondria (By similarity). Specifically recognizes and binds tail-anchored transmembrane proteins: acts as a dislocase that mediates the ATP-dependent extraction of mistargeted tail-anchored transmembrane proteins from the mitochondrion outer membrane (By similarity). Also plays a critical role in regulating the surface expression of AMPA receptors (AMPAR), thereby regulating synaptic plasticity and learning and memory (By similarity).</text>
</comment>
<comment type="catalytic activity">
    <reaction evidence="1 2">
        <text>[protein]-with a C-terminal TM segment(out) + ATP + H2O = [protein]-with a C-terminal TM segment(in) + ADP + phosphate + H(+)</text>
        <dbReference type="Rhea" id="RHEA:66168"/>
        <dbReference type="Rhea" id="RHEA-COMP:16963"/>
        <dbReference type="ChEBI" id="CHEBI:15377"/>
        <dbReference type="ChEBI" id="CHEBI:15378"/>
        <dbReference type="ChEBI" id="CHEBI:30616"/>
        <dbReference type="ChEBI" id="CHEBI:43474"/>
        <dbReference type="ChEBI" id="CHEBI:90782"/>
        <dbReference type="ChEBI" id="CHEBI:456216"/>
    </reaction>
</comment>
<comment type="subcellular location">
    <subcellularLocation>
        <location evidence="2">Mitochondrion outer membrane</location>
        <topology evidence="4">Single-pass membrane protein</topology>
    </subcellularLocation>
    <subcellularLocation>
        <location evidence="2">Peroxisome membrane</location>
        <topology evidence="4">Single-pass membrane protein</topology>
    </subcellularLocation>
    <subcellularLocation>
        <location evidence="3">Postsynaptic cell membrane</location>
        <topology evidence="4">Single-pass membrane protein</topology>
    </subcellularLocation>
</comment>
<comment type="alternative products">
    <event type="alternative splicing"/>
    <isoform>
        <id>Q7ZZ25-1</id>
        <name>1</name>
        <sequence type="displayed"/>
    </isoform>
    <isoform>
        <id>Q7ZZ25-2</id>
        <name>2</name>
        <sequence type="described" ref="VSP_015632"/>
    </isoform>
</comment>
<comment type="similarity">
    <text evidence="7">Belongs to the AAA ATPase family. MSP1 subfamily.</text>
</comment>
<reference key="1">
    <citation type="journal article" date="2013" name="Nature">
        <title>The zebrafish reference genome sequence and its relationship to the human genome.</title>
        <authorList>
            <person name="Howe K."/>
            <person name="Clark M.D."/>
            <person name="Torroja C.F."/>
            <person name="Torrance J."/>
            <person name="Berthelot C."/>
            <person name="Muffato M."/>
            <person name="Collins J.E."/>
            <person name="Humphray S."/>
            <person name="McLaren K."/>
            <person name="Matthews L."/>
            <person name="McLaren S."/>
            <person name="Sealy I."/>
            <person name="Caccamo M."/>
            <person name="Churcher C."/>
            <person name="Scott C."/>
            <person name="Barrett J.C."/>
            <person name="Koch R."/>
            <person name="Rauch G.J."/>
            <person name="White S."/>
            <person name="Chow W."/>
            <person name="Kilian B."/>
            <person name="Quintais L.T."/>
            <person name="Guerra-Assuncao J.A."/>
            <person name="Zhou Y."/>
            <person name="Gu Y."/>
            <person name="Yen J."/>
            <person name="Vogel J.H."/>
            <person name="Eyre T."/>
            <person name="Redmond S."/>
            <person name="Banerjee R."/>
            <person name="Chi J."/>
            <person name="Fu B."/>
            <person name="Langley E."/>
            <person name="Maguire S.F."/>
            <person name="Laird G.K."/>
            <person name="Lloyd D."/>
            <person name="Kenyon E."/>
            <person name="Donaldson S."/>
            <person name="Sehra H."/>
            <person name="Almeida-King J."/>
            <person name="Loveland J."/>
            <person name="Trevanion S."/>
            <person name="Jones M."/>
            <person name="Quail M."/>
            <person name="Willey D."/>
            <person name="Hunt A."/>
            <person name="Burton J."/>
            <person name="Sims S."/>
            <person name="McLay K."/>
            <person name="Plumb B."/>
            <person name="Davis J."/>
            <person name="Clee C."/>
            <person name="Oliver K."/>
            <person name="Clark R."/>
            <person name="Riddle C."/>
            <person name="Elliot D."/>
            <person name="Threadgold G."/>
            <person name="Harden G."/>
            <person name="Ware D."/>
            <person name="Begum S."/>
            <person name="Mortimore B."/>
            <person name="Kerry G."/>
            <person name="Heath P."/>
            <person name="Phillimore B."/>
            <person name="Tracey A."/>
            <person name="Corby N."/>
            <person name="Dunn M."/>
            <person name="Johnson C."/>
            <person name="Wood J."/>
            <person name="Clark S."/>
            <person name="Pelan S."/>
            <person name="Griffiths G."/>
            <person name="Smith M."/>
            <person name="Glithero R."/>
            <person name="Howden P."/>
            <person name="Barker N."/>
            <person name="Lloyd C."/>
            <person name="Stevens C."/>
            <person name="Harley J."/>
            <person name="Holt K."/>
            <person name="Panagiotidis G."/>
            <person name="Lovell J."/>
            <person name="Beasley H."/>
            <person name="Henderson C."/>
            <person name="Gordon D."/>
            <person name="Auger K."/>
            <person name="Wright D."/>
            <person name="Collins J."/>
            <person name="Raisen C."/>
            <person name="Dyer L."/>
            <person name="Leung K."/>
            <person name="Robertson L."/>
            <person name="Ambridge K."/>
            <person name="Leongamornlert D."/>
            <person name="McGuire S."/>
            <person name="Gilderthorp R."/>
            <person name="Griffiths C."/>
            <person name="Manthravadi D."/>
            <person name="Nichol S."/>
            <person name="Barker G."/>
            <person name="Whitehead S."/>
            <person name="Kay M."/>
            <person name="Brown J."/>
            <person name="Murnane C."/>
            <person name="Gray E."/>
            <person name="Humphries M."/>
            <person name="Sycamore N."/>
            <person name="Barker D."/>
            <person name="Saunders D."/>
            <person name="Wallis J."/>
            <person name="Babbage A."/>
            <person name="Hammond S."/>
            <person name="Mashreghi-Mohammadi M."/>
            <person name="Barr L."/>
            <person name="Martin S."/>
            <person name="Wray P."/>
            <person name="Ellington A."/>
            <person name="Matthews N."/>
            <person name="Ellwood M."/>
            <person name="Woodmansey R."/>
            <person name="Clark G."/>
            <person name="Cooper J."/>
            <person name="Tromans A."/>
            <person name="Grafham D."/>
            <person name="Skuce C."/>
            <person name="Pandian R."/>
            <person name="Andrews R."/>
            <person name="Harrison E."/>
            <person name="Kimberley A."/>
            <person name="Garnett J."/>
            <person name="Fosker N."/>
            <person name="Hall R."/>
            <person name="Garner P."/>
            <person name="Kelly D."/>
            <person name="Bird C."/>
            <person name="Palmer S."/>
            <person name="Gehring I."/>
            <person name="Berger A."/>
            <person name="Dooley C.M."/>
            <person name="Ersan-Urun Z."/>
            <person name="Eser C."/>
            <person name="Geiger H."/>
            <person name="Geisler M."/>
            <person name="Karotki L."/>
            <person name="Kirn A."/>
            <person name="Konantz J."/>
            <person name="Konantz M."/>
            <person name="Oberlander M."/>
            <person name="Rudolph-Geiger S."/>
            <person name="Teucke M."/>
            <person name="Lanz C."/>
            <person name="Raddatz G."/>
            <person name="Osoegawa K."/>
            <person name="Zhu B."/>
            <person name="Rapp A."/>
            <person name="Widaa S."/>
            <person name="Langford C."/>
            <person name="Yang F."/>
            <person name="Schuster S.C."/>
            <person name="Carter N.P."/>
            <person name="Harrow J."/>
            <person name="Ning Z."/>
            <person name="Herrero J."/>
            <person name="Searle S.M."/>
            <person name="Enright A."/>
            <person name="Geisler R."/>
            <person name="Plasterk R.H."/>
            <person name="Lee C."/>
            <person name="Westerfield M."/>
            <person name="de Jong P.J."/>
            <person name="Zon L.I."/>
            <person name="Postlethwait J.H."/>
            <person name="Nusslein-Volhard C."/>
            <person name="Hubbard T.J."/>
            <person name="Roest Crollius H."/>
            <person name="Rogers J."/>
            <person name="Stemple D.L."/>
        </authorList>
    </citation>
    <scope>NUCLEOTIDE SEQUENCE [LARGE SCALE GENOMIC DNA]</scope>
    <source>
        <strain>Tuebingen</strain>
    </source>
</reference>
<reference key="2">
    <citation type="submission" date="2004-09" db="EMBL/GenBank/DDBJ databases">
        <authorList>
            <consortium name="NIH - Zebrafish Gene Collection (ZGC) project"/>
        </authorList>
    </citation>
    <scope>NUCLEOTIDE SEQUENCE [LARGE SCALE MRNA] (ISOFORM 2)</scope>
    <source>
        <tissue>Embryo</tissue>
    </source>
</reference>
<sequence>MLSDIPRDALLRPLTRNEVVGMLVRLTVFGAATYYSIKWVVDALDPTQKQKSQAKKRAEQLMKQIGVEGVSLTEYEMNIATLLVDPRSIKVTWRDVAGLDEIISEMQDTVILPFQKRHLFSGSKLLQPPKGVLLYGPPGCGKTLIAKATAKASGCRFINLQASTLTDKWYGESQKLTAAVFSLAVKIQPCIIFLDEIDSFLRNRSSMDHEATAMMKAQFMSLWDGLDTGENSQVMVMGATNRPQDVDAAILRRMPTAFHVGLPNAAQREEILRLILSGENLSNAINLKEIASQSEGYSGSDLKELCRDAAMYRVRDYVRKQQMKQIAQQFQLDEEEEHVDSRQLRPVTQLDLLFGLDKMRESKQATATTDPANLREVPLD</sequence>
<name>ATD1A_DANRE</name>
<organism>
    <name type="scientific">Danio rerio</name>
    <name type="common">Zebrafish</name>
    <name type="synonym">Brachydanio rerio</name>
    <dbReference type="NCBI Taxonomy" id="7955"/>
    <lineage>
        <taxon>Eukaryota</taxon>
        <taxon>Metazoa</taxon>
        <taxon>Chordata</taxon>
        <taxon>Craniata</taxon>
        <taxon>Vertebrata</taxon>
        <taxon>Euteleostomi</taxon>
        <taxon>Actinopterygii</taxon>
        <taxon>Neopterygii</taxon>
        <taxon>Teleostei</taxon>
        <taxon>Ostariophysi</taxon>
        <taxon>Cypriniformes</taxon>
        <taxon>Danionidae</taxon>
        <taxon>Danioninae</taxon>
        <taxon>Danio</taxon>
    </lineage>
</organism>
<accession>Q7ZZ25</accession>
<accession>Q66IE9</accession>
<proteinExistence type="evidence at transcript level"/>
<protein>
    <recommendedName>
        <fullName evidence="7">Outer mitochondrial transmembrane helix translocase</fullName>
        <ecNumber evidence="1 2">7.4.2.-</ecNumber>
    </recommendedName>
    <alternativeName>
        <fullName evidence="7">ATPase family AAA domain-containing protein 1-A</fullName>
    </alternativeName>
</protein>
<feature type="chain" id="PRO_0000084794" description="Outer mitochondrial transmembrane helix translocase">
    <location>
        <begin position="1"/>
        <end position="380"/>
    </location>
</feature>
<feature type="topological domain" description="Mitochondrial intermembrane" evidence="7">
    <location>
        <begin position="1"/>
        <end position="18"/>
    </location>
</feature>
<feature type="transmembrane region" description="Helical" evidence="4">
    <location>
        <begin position="19"/>
        <end position="37"/>
    </location>
</feature>
<feature type="topological domain" description="Cytoplasmic" evidence="7">
    <location>
        <begin position="38"/>
        <end position="380"/>
    </location>
</feature>
<feature type="binding site" evidence="4">
    <location>
        <begin position="136"/>
        <end position="143"/>
    </location>
    <ligand>
        <name>ATP</name>
        <dbReference type="ChEBI" id="CHEBI:30616"/>
    </ligand>
</feature>
<feature type="splice variant" id="VSP_015632" description="In isoform 2." evidence="6">
    <location>
        <begin position="330"/>
        <end position="337"/>
    </location>
</feature>
<evidence type="ECO:0000250" key="1">
    <source>
        <dbReference type="UniProtKB" id="P28737"/>
    </source>
</evidence>
<evidence type="ECO:0000250" key="2">
    <source>
        <dbReference type="UniProtKB" id="Q8NBU5"/>
    </source>
</evidence>
<evidence type="ECO:0000250" key="3">
    <source>
        <dbReference type="UniProtKB" id="Q9D5T0"/>
    </source>
</evidence>
<evidence type="ECO:0000255" key="4"/>
<evidence type="ECO:0000303" key="5">
    <source>
    </source>
</evidence>
<evidence type="ECO:0000303" key="6">
    <source ref="2"/>
</evidence>
<evidence type="ECO:0000305" key="7"/>
<keyword id="KW-0025">Alternative splicing</keyword>
<keyword id="KW-0067">ATP-binding</keyword>
<keyword id="KW-1003">Cell membrane</keyword>
<keyword id="KW-0472">Membrane</keyword>
<keyword id="KW-0496">Mitochondrion</keyword>
<keyword id="KW-1000">Mitochondrion outer membrane</keyword>
<keyword id="KW-0547">Nucleotide-binding</keyword>
<keyword id="KW-0576">Peroxisome</keyword>
<keyword id="KW-0628">Postsynaptic cell membrane</keyword>
<keyword id="KW-1185">Reference proteome</keyword>
<keyword id="KW-0770">Synapse</keyword>
<keyword id="KW-1278">Translocase</keyword>
<keyword id="KW-0812">Transmembrane</keyword>
<keyword id="KW-1133">Transmembrane helix</keyword>
<gene>
    <name evidence="2" type="primary">atad1a</name>
    <name evidence="5" type="ORF">si:zc156n3.1</name>
    <name evidence="6" type="ORF">zgc:101570</name>
</gene>
<dbReference type="EC" id="7.4.2.-" evidence="1 2"/>
<dbReference type="EMBL" id="AL772163">
    <property type="protein sequence ID" value="CAD60864.1"/>
    <property type="molecule type" value="Genomic_DNA"/>
</dbReference>
<dbReference type="EMBL" id="BC081379">
    <property type="protein sequence ID" value="AAH81379.1"/>
    <property type="molecule type" value="mRNA"/>
</dbReference>
<dbReference type="RefSeq" id="NP_001004640.1">
    <molecule id="Q7ZZ25-1"/>
    <property type="nucleotide sequence ID" value="NM_001004640.3"/>
</dbReference>
<dbReference type="SMR" id="Q7ZZ25"/>
<dbReference type="FunCoup" id="Q7ZZ25">
    <property type="interactions" value="1715"/>
</dbReference>
<dbReference type="STRING" id="7955.ENSDARP00000035974"/>
<dbReference type="PaxDb" id="7955-ENSDARP00000035974"/>
<dbReference type="Ensembl" id="ENSDART00000035859">
    <molecule id="Q7ZZ25-1"/>
    <property type="protein sequence ID" value="ENSDARP00000035974"/>
    <property type="gene ID" value="ENSDARG00000023267"/>
</dbReference>
<dbReference type="GeneID" id="368672"/>
<dbReference type="KEGG" id="dre:368672"/>
<dbReference type="AGR" id="ZFIN:ZDB-GENE-030616-593"/>
<dbReference type="CTD" id="368672"/>
<dbReference type="ZFIN" id="ZDB-GENE-030616-593">
    <property type="gene designation" value="atad1a"/>
</dbReference>
<dbReference type="eggNOG" id="KOG0737">
    <property type="taxonomic scope" value="Eukaryota"/>
</dbReference>
<dbReference type="HOGENOM" id="CLU_000688_21_14_1"/>
<dbReference type="InParanoid" id="Q7ZZ25"/>
<dbReference type="OrthoDB" id="10254455at2759"/>
<dbReference type="PhylomeDB" id="Q7ZZ25"/>
<dbReference type="TreeFam" id="TF105016"/>
<dbReference type="PRO" id="PR:Q7ZZ25"/>
<dbReference type="Proteomes" id="UP000000437">
    <property type="component" value="Chromosome 5"/>
</dbReference>
<dbReference type="Bgee" id="ENSDARG00000023267">
    <property type="expression patterns" value="Expressed in blastula and 21 other cell types or tissues"/>
</dbReference>
<dbReference type="ExpressionAtlas" id="Q7ZZ25">
    <property type="expression patterns" value="baseline"/>
</dbReference>
<dbReference type="GO" id="GO:0005741">
    <property type="term" value="C:mitochondrial outer membrane"/>
    <property type="evidence" value="ECO:0000250"/>
    <property type="project" value="UniProtKB"/>
</dbReference>
<dbReference type="GO" id="GO:0005778">
    <property type="term" value="C:peroxisomal membrane"/>
    <property type="evidence" value="ECO:0000250"/>
    <property type="project" value="UniProtKB"/>
</dbReference>
<dbReference type="GO" id="GO:0045211">
    <property type="term" value="C:postsynaptic membrane"/>
    <property type="evidence" value="ECO:0007669"/>
    <property type="project" value="UniProtKB-SubCell"/>
</dbReference>
<dbReference type="GO" id="GO:0005524">
    <property type="term" value="F:ATP binding"/>
    <property type="evidence" value="ECO:0007669"/>
    <property type="project" value="UniProtKB-KW"/>
</dbReference>
<dbReference type="GO" id="GO:0016887">
    <property type="term" value="F:ATP hydrolysis activity"/>
    <property type="evidence" value="ECO:0007669"/>
    <property type="project" value="InterPro"/>
</dbReference>
<dbReference type="GO" id="GO:0140567">
    <property type="term" value="F:membrane protein dislocase activity"/>
    <property type="evidence" value="ECO:0007669"/>
    <property type="project" value="RHEA"/>
</dbReference>
<dbReference type="GO" id="GO:0009653">
    <property type="term" value="P:anatomical structure morphogenesis"/>
    <property type="evidence" value="ECO:0007669"/>
    <property type="project" value="UniProtKB-ARBA"/>
</dbReference>
<dbReference type="GO" id="GO:0140570">
    <property type="term" value="P:extraction of mislocalized protein from mitochondrial outer membrane"/>
    <property type="evidence" value="ECO:0000250"/>
    <property type="project" value="UniProtKB"/>
</dbReference>
<dbReference type="CDD" id="cd19520">
    <property type="entry name" value="RecA-like_ATAD1"/>
    <property type="match status" value="1"/>
</dbReference>
<dbReference type="FunFam" id="3.40.50.300:FF:000538">
    <property type="entry name" value="ATPase family AAA domain-containing protein 1"/>
    <property type="match status" value="1"/>
</dbReference>
<dbReference type="Gene3D" id="1.10.8.60">
    <property type="match status" value="1"/>
</dbReference>
<dbReference type="Gene3D" id="3.40.50.300">
    <property type="entry name" value="P-loop containing nucleotide triphosphate hydrolases"/>
    <property type="match status" value="1"/>
</dbReference>
<dbReference type="InterPro" id="IPR003593">
    <property type="entry name" value="AAA+_ATPase"/>
</dbReference>
<dbReference type="InterPro" id="IPR041569">
    <property type="entry name" value="AAA_lid_3"/>
</dbReference>
<dbReference type="InterPro" id="IPR003959">
    <property type="entry name" value="ATPase_AAA_core"/>
</dbReference>
<dbReference type="InterPro" id="IPR003960">
    <property type="entry name" value="ATPase_AAA_CS"/>
</dbReference>
<dbReference type="InterPro" id="IPR051701">
    <property type="entry name" value="Mito_OM_Translocase_MSP1"/>
</dbReference>
<dbReference type="InterPro" id="IPR027417">
    <property type="entry name" value="P-loop_NTPase"/>
</dbReference>
<dbReference type="PANTHER" id="PTHR45644">
    <property type="entry name" value="AAA ATPASE, PUTATIVE (AFU_ORTHOLOGUE AFUA_2G12920)-RELATED-RELATED"/>
    <property type="match status" value="1"/>
</dbReference>
<dbReference type="PANTHER" id="PTHR45644:SF8">
    <property type="entry name" value="OUTER MITOCHONDRIAL TRANSMEMBRANE HELIX TRANSLOCASE"/>
    <property type="match status" value="1"/>
</dbReference>
<dbReference type="Pfam" id="PF00004">
    <property type="entry name" value="AAA"/>
    <property type="match status" value="1"/>
</dbReference>
<dbReference type="Pfam" id="PF17862">
    <property type="entry name" value="AAA_lid_3"/>
    <property type="match status" value="1"/>
</dbReference>
<dbReference type="SMART" id="SM00382">
    <property type="entry name" value="AAA"/>
    <property type="match status" value="1"/>
</dbReference>
<dbReference type="SUPFAM" id="SSF52540">
    <property type="entry name" value="P-loop containing nucleoside triphosphate hydrolases"/>
    <property type="match status" value="1"/>
</dbReference>
<dbReference type="PROSITE" id="PS00674">
    <property type="entry name" value="AAA"/>
    <property type="match status" value="1"/>
</dbReference>